<dbReference type="EC" id="3.6.1.-" evidence="1"/>
<dbReference type="EC" id="3.6.1.22" evidence="1"/>
<dbReference type="EMBL" id="BX950851">
    <property type="protein sequence ID" value="CAG73154.1"/>
    <property type="molecule type" value="Genomic_DNA"/>
</dbReference>
<dbReference type="RefSeq" id="WP_011091872.1">
    <property type="nucleotide sequence ID" value="NC_004547.2"/>
</dbReference>
<dbReference type="SMR" id="Q6DAL8"/>
<dbReference type="STRING" id="218491.ECA0234"/>
<dbReference type="KEGG" id="eca:ECA0234"/>
<dbReference type="PATRIC" id="fig|218491.5.peg.236"/>
<dbReference type="eggNOG" id="COG2816">
    <property type="taxonomic scope" value="Bacteria"/>
</dbReference>
<dbReference type="HOGENOM" id="CLU_037162_0_1_6"/>
<dbReference type="OrthoDB" id="9791656at2"/>
<dbReference type="Proteomes" id="UP000007966">
    <property type="component" value="Chromosome"/>
</dbReference>
<dbReference type="GO" id="GO:0005829">
    <property type="term" value="C:cytosol"/>
    <property type="evidence" value="ECO:0007669"/>
    <property type="project" value="TreeGrafter"/>
</dbReference>
<dbReference type="GO" id="GO:0000287">
    <property type="term" value="F:magnesium ion binding"/>
    <property type="evidence" value="ECO:0007669"/>
    <property type="project" value="UniProtKB-UniRule"/>
</dbReference>
<dbReference type="GO" id="GO:0030145">
    <property type="term" value="F:manganese ion binding"/>
    <property type="evidence" value="ECO:0007669"/>
    <property type="project" value="UniProtKB-UniRule"/>
</dbReference>
<dbReference type="GO" id="GO:0000210">
    <property type="term" value="F:NAD+ diphosphatase activity"/>
    <property type="evidence" value="ECO:0007669"/>
    <property type="project" value="UniProtKB-UniRule"/>
</dbReference>
<dbReference type="GO" id="GO:0035529">
    <property type="term" value="F:NADH pyrophosphatase activity"/>
    <property type="evidence" value="ECO:0007669"/>
    <property type="project" value="TreeGrafter"/>
</dbReference>
<dbReference type="GO" id="GO:0110153">
    <property type="term" value="F:RNA NAD-cap (NMN-forming) hydrolase activity"/>
    <property type="evidence" value="ECO:0007669"/>
    <property type="project" value="RHEA"/>
</dbReference>
<dbReference type="GO" id="GO:0008270">
    <property type="term" value="F:zinc ion binding"/>
    <property type="evidence" value="ECO:0007669"/>
    <property type="project" value="UniProtKB-UniRule"/>
</dbReference>
<dbReference type="GO" id="GO:0019677">
    <property type="term" value="P:NAD catabolic process"/>
    <property type="evidence" value="ECO:0007669"/>
    <property type="project" value="TreeGrafter"/>
</dbReference>
<dbReference type="GO" id="GO:0006734">
    <property type="term" value="P:NADH metabolic process"/>
    <property type="evidence" value="ECO:0007669"/>
    <property type="project" value="TreeGrafter"/>
</dbReference>
<dbReference type="GO" id="GO:0006742">
    <property type="term" value="P:NADP catabolic process"/>
    <property type="evidence" value="ECO:0007669"/>
    <property type="project" value="TreeGrafter"/>
</dbReference>
<dbReference type="CDD" id="cd03429">
    <property type="entry name" value="NUDIX_NADH_pyrophosphatase_Nudt13"/>
    <property type="match status" value="1"/>
</dbReference>
<dbReference type="FunFam" id="3.90.79.10:FF:000004">
    <property type="entry name" value="NADH pyrophosphatase"/>
    <property type="match status" value="1"/>
</dbReference>
<dbReference type="FunFam" id="3.90.79.20:FF:000001">
    <property type="entry name" value="NADH pyrophosphatase"/>
    <property type="match status" value="1"/>
</dbReference>
<dbReference type="Gene3D" id="3.90.79.20">
    <property type="match status" value="1"/>
</dbReference>
<dbReference type="Gene3D" id="3.90.79.10">
    <property type="entry name" value="Nucleoside Triphosphate Pyrophosphohydrolase"/>
    <property type="match status" value="1"/>
</dbReference>
<dbReference type="HAMAP" id="MF_00297">
    <property type="entry name" value="Nudix_NudC"/>
    <property type="match status" value="1"/>
</dbReference>
<dbReference type="InterPro" id="IPR050241">
    <property type="entry name" value="NAD-cap_RNA_hydrolase_NudC"/>
</dbReference>
<dbReference type="InterPro" id="IPR049734">
    <property type="entry name" value="NudC-like_C"/>
</dbReference>
<dbReference type="InterPro" id="IPR015797">
    <property type="entry name" value="NUDIX_hydrolase-like_dom_sf"/>
</dbReference>
<dbReference type="InterPro" id="IPR000086">
    <property type="entry name" value="NUDIX_hydrolase_dom"/>
</dbReference>
<dbReference type="InterPro" id="IPR022925">
    <property type="entry name" value="RNA_Hydrolase_NudC"/>
</dbReference>
<dbReference type="InterPro" id="IPR015376">
    <property type="entry name" value="Znr_NADH_PPase"/>
</dbReference>
<dbReference type="NCBIfam" id="NF001299">
    <property type="entry name" value="PRK00241.1"/>
    <property type="match status" value="1"/>
</dbReference>
<dbReference type="PANTHER" id="PTHR42904:SF6">
    <property type="entry name" value="NAD-CAPPED RNA HYDROLASE NUDT12"/>
    <property type="match status" value="1"/>
</dbReference>
<dbReference type="PANTHER" id="PTHR42904">
    <property type="entry name" value="NUDIX HYDROLASE, NUDC SUBFAMILY"/>
    <property type="match status" value="1"/>
</dbReference>
<dbReference type="Pfam" id="PF00293">
    <property type="entry name" value="NUDIX"/>
    <property type="match status" value="1"/>
</dbReference>
<dbReference type="Pfam" id="PF09297">
    <property type="entry name" value="Zn_ribbon_NUD"/>
    <property type="match status" value="1"/>
</dbReference>
<dbReference type="SUPFAM" id="SSF55811">
    <property type="entry name" value="Nudix"/>
    <property type="match status" value="2"/>
</dbReference>
<dbReference type="PROSITE" id="PS51462">
    <property type="entry name" value="NUDIX"/>
    <property type="match status" value="1"/>
</dbReference>
<name>NUDC_PECAS</name>
<organism>
    <name type="scientific">Pectobacterium atrosepticum (strain SCRI 1043 / ATCC BAA-672)</name>
    <name type="common">Erwinia carotovora subsp. atroseptica</name>
    <dbReference type="NCBI Taxonomy" id="218491"/>
    <lineage>
        <taxon>Bacteria</taxon>
        <taxon>Pseudomonadati</taxon>
        <taxon>Pseudomonadota</taxon>
        <taxon>Gammaproteobacteria</taxon>
        <taxon>Enterobacterales</taxon>
        <taxon>Pectobacteriaceae</taxon>
        <taxon>Pectobacterium</taxon>
    </lineage>
</organism>
<reference key="1">
    <citation type="journal article" date="2004" name="Proc. Natl. Acad. Sci. U.S.A.">
        <title>Genome sequence of the enterobacterial phytopathogen Erwinia carotovora subsp. atroseptica and characterization of virulence factors.</title>
        <authorList>
            <person name="Bell K.S."/>
            <person name="Sebaihia M."/>
            <person name="Pritchard L."/>
            <person name="Holden M.T.G."/>
            <person name="Hyman L.J."/>
            <person name="Holeva M.C."/>
            <person name="Thomson N.R."/>
            <person name="Bentley S.D."/>
            <person name="Churcher L.J.C."/>
            <person name="Mungall K."/>
            <person name="Atkin R."/>
            <person name="Bason N."/>
            <person name="Brooks K."/>
            <person name="Chillingworth T."/>
            <person name="Clark K."/>
            <person name="Doggett J."/>
            <person name="Fraser A."/>
            <person name="Hance Z."/>
            <person name="Hauser H."/>
            <person name="Jagels K."/>
            <person name="Moule S."/>
            <person name="Norbertczak H."/>
            <person name="Ormond D."/>
            <person name="Price C."/>
            <person name="Quail M.A."/>
            <person name="Sanders M."/>
            <person name="Walker D."/>
            <person name="Whitehead S."/>
            <person name="Salmond G.P.C."/>
            <person name="Birch P.R.J."/>
            <person name="Parkhill J."/>
            <person name="Toth I.K."/>
        </authorList>
    </citation>
    <scope>NUCLEOTIDE SEQUENCE [LARGE SCALE GENOMIC DNA]</scope>
    <source>
        <strain>SCRI 1043 / ATCC BAA-672</strain>
    </source>
</reference>
<sequence length="260" mass="29791">MEQTLKGDETGWWVVSDAVQIWMPQGELPRGTATEWSLQGKTARQIGEWQGQPAWLVCQGRDTDMASVRQLLDQDVGLFQLAGRGVQLAEFYRSHRFCGYCGHEMVRSKTELACLCHHCKERYYPQIAPCIIVAIRRGEEILLAQHNRHRGNMYTVLAGFVEVGETLEQTVVREVMEESQIQIKNLRYVSSQPWPFPHSLMMAFMADYAGGDIKHDPKELRDAGWFRYDQLPQLPPPGTVARRLIEDTVVLCRAYHENEG</sequence>
<gene>
    <name evidence="1" type="primary">nudC</name>
    <name type="ordered locus">ECA0234</name>
</gene>
<keyword id="KW-0378">Hydrolase</keyword>
<keyword id="KW-0460">Magnesium</keyword>
<keyword id="KW-0464">Manganese</keyword>
<keyword id="KW-0479">Metal-binding</keyword>
<keyword id="KW-0520">NAD</keyword>
<keyword id="KW-1185">Reference proteome</keyword>
<keyword id="KW-0862">Zinc</keyword>
<proteinExistence type="inferred from homology"/>
<comment type="function">
    <text evidence="1">mRNA decapping enzyme that specifically removes the nicotinamide adenine dinucleotide (NAD) cap from a subset of mRNAs by hydrolyzing the diphosphate linkage to produce nicotinamide mononucleotide (NMN) and 5' monophosphate mRNA. The NAD-cap is present at the 5'-end of some mRNAs and stabilizes RNA against 5'-processing. Has preference for mRNAs with a 5'-end purine. Catalyzes the hydrolysis of a broad range of dinucleotide pyrophosphates.</text>
</comment>
<comment type="catalytic activity">
    <reaction evidence="1">
        <text>a 5'-end NAD(+)-phospho-ribonucleoside in mRNA + H2O = a 5'-end phospho-adenosine-phospho-ribonucleoside in mRNA + beta-nicotinamide D-ribonucleotide + 2 H(+)</text>
        <dbReference type="Rhea" id="RHEA:60876"/>
        <dbReference type="Rhea" id="RHEA-COMP:15698"/>
        <dbReference type="Rhea" id="RHEA-COMP:15719"/>
        <dbReference type="ChEBI" id="CHEBI:14649"/>
        <dbReference type="ChEBI" id="CHEBI:15377"/>
        <dbReference type="ChEBI" id="CHEBI:15378"/>
        <dbReference type="ChEBI" id="CHEBI:144029"/>
        <dbReference type="ChEBI" id="CHEBI:144051"/>
    </reaction>
    <physiologicalReaction direction="left-to-right" evidence="1">
        <dbReference type="Rhea" id="RHEA:60877"/>
    </physiologicalReaction>
</comment>
<comment type="catalytic activity">
    <reaction evidence="1">
        <text>NAD(+) + H2O = beta-nicotinamide D-ribonucleotide + AMP + 2 H(+)</text>
        <dbReference type="Rhea" id="RHEA:11800"/>
        <dbReference type="ChEBI" id="CHEBI:14649"/>
        <dbReference type="ChEBI" id="CHEBI:15377"/>
        <dbReference type="ChEBI" id="CHEBI:15378"/>
        <dbReference type="ChEBI" id="CHEBI:57540"/>
        <dbReference type="ChEBI" id="CHEBI:456215"/>
        <dbReference type="EC" id="3.6.1.22"/>
    </reaction>
</comment>
<comment type="catalytic activity">
    <reaction evidence="1">
        <text>NADH + H2O = reduced beta-nicotinamide D-ribonucleotide + AMP + 2 H(+)</text>
        <dbReference type="Rhea" id="RHEA:48868"/>
        <dbReference type="ChEBI" id="CHEBI:15377"/>
        <dbReference type="ChEBI" id="CHEBI:15378"/>
        <dbReference type="ChEBI" id="CHEBI:57945"/>
        <dbReference type="ChEBI" id="CHEBI:90832"/>
        <dbReference type="ChEBI" id="CHEBI:456215"/>
        <dbReference type="EC" id="3.6.1.22"/>
    </reaction>
</comment>
<comment type="cofactor">
    <cofactor evidence="1">
        <name>Mg(2+)</name>
        <dbReference type="ChEBI" id="CHEBI:18420"/>
    </cofactor>
    <cofactor evidence="1">
        <name>Mn(2+)</name>
        <dbReference type="ChEBI" id="CHEBI:29035"/>
    </cofactor>
    <text evidence="1">Divalent metal cations. Mg(2+) or Mn(2+).</text>
</comment>
<comment type="cofactor">
    <cofactor evidence="1">
        <name>Zn(2+)</name>
        <dbReference type="ChEBI" id="CHEBI:29105"/>
    </cofactor>
    <text evidence="1">Binds 1 zinc ion per subunit.</text>
</comment>
<comment type="subunit">
    <text evidence="1">Homodimer.</text>
</comment>
<comment type="similarity">
    <text evidence="1">Belongs to the Nudix hydrolase family. NudC subfamily.</text>
</comment>
<protein>
    <recommendedName>
        <fullName evidence="1">NAD-capped RNA hydrolase NudC</fullName>
        <shortName evidence="1">DeNADding enzyme NudC</shortName>
        <ecNumber evidence="1">3.6.1.-</ecNumber>
    </recommendedName>
    <alternativeName>
        <fullName evidence="1">NADH pyrophosphatase</fullName>
        <ecNumber evidence="1">3.6.1.22</ecNumber>
    </alternativeName>
</protein>
<feature type="chain" id="PRO_0000056966" description="NAD-capped RNA hydrolase NudC">
    <location>
        <begin position="1"/>
        <end position="260"/>
    </location>
</feature>
<feature type="domain" description="Nudix hydrolase" evidence="1">
    <location>
        <begin position="125"/>
        <end position="248"/>
    </location>
</feature>
<feature type="short sequence motif" description="Nudix box" evidence="1">
    <location>
        <begin position="159"/>
        <end position="180"/>
    </location>
</feature>
<feature type="binding site" evidence="1">
    <location>
        <position position="69"/>
    </location>
    <ligand>
        <name>substrate</name>
    </ligand>
</feature>
<feature type="binding site" evidence="1">
    <location>
        <position position="98"/>
    </location>
    <ligand>
        <name>Zn(2+)</name>
        <dbReference type="ChEBI" id="CHEBI:29105"/>
    </ligand>
</feature>
<feature type="binding site" evidence="1">
    <location>
        <position position="101"/>
    </location>
    <ligand>
        <name>Zn(2+)</name>
        <dbReference type="ChEBI" id="CHEBI:29105"/>
    </ligand>
</feature>
<feature type="binding site" evidence="1">
    <location>
        <position position="111"/>
    </location>
    <ligand>
        <name>substrate</name>
    </ligand>
</feature>
<feature type="binding site" evidence="1">
    <location>
        <position position="116"/>
    </location>
    <ligand>
        <name>Zn(2+)</name>
        <dbReference type="ChEBI" id="CHEBI:29105"/>
    </ligand>
</feature>
<feature type="binding site" evidence="1">
    <location>
        <position position="119"/>
    </location>
    <ligand>
        <name>Zn(2+)</name>
        <dbReference type="ChEBI" id="CHEBI:29105"/>
    </ligand>
</feature>
<feature type="binding site" evidence="1">
    <location>
        <position position="124"/>
    </location>
    <ligand>
        <name>substrate</name>
    </ligand>
</feature>
<feature type="binding site" evidence="1">
    <location>
        <position position="158"/>
    </location>
    <ligand>
        <name>a divalent metal cation</name>
        <dbReference type="ChEBI" id="CHEBI:60240"/>
        <label>1</label>
    </ligand>
</feature>
<feature type="binding site" evidence="1">
    <location>
        <position position="174"/>
    </location>
    <ligand>
        <name>a divalent metal cation</name>
        <dbReference type="ChEBI" id="CHEBI:60240"/>
        <label>2</label>
    </ligand>
</feature>
<feature type="binding site" evidence="1">
    <location>
        <position position="174"/>
    </location>
    <ligand>
        <name>a divalent metal cation</name>
        <dbReference type="ChEBI" id="CHEBI:60240"/>
        <label>3</label>
    </ligand>
</feature>
<feature type="binding site" evidence="1">
    <location>
        <position position="178"/>
    </location>
    <ligand>
        <name>a divalent metal cation</name>
        <dbReference type="ChEBI" id="CHEBI:60240"/>
        <label>1</label>
    </ligand>
</feature>
<feature type="binding site" evidence="1">
    <location>
        <position position="178"/>
    </location>
    <ligand>
        <name>a divalent metal cation</name>
        <dbReference type="ChEBI" id="CHEBI:60240"/>
        <label>3</label>
    </ligand>
</feature>
<feature type="binding site" evidence="1">
    <location>
        <begin position="192"/>
        <end position="199"/>
    </location>
    <ligand>
        <name>substrate</name>
    </ligand>
</feature>
<feature type="binding site" evidence="1">
    <location>
        <position position="219"/>
    </location>
    <ligand>
        <name>a divalent metal cation</name>
        <dbReference type="ChEBI" id="CHEBI:60240"/>
        <label>1</label>
    </ligand>
</feature>
<feature type="binding site" evidence="1">
    <location>
        <position position="219"/>
    </location>
    <ligand>
        <name>a divalent metal cation</name>
        <dbReference type="ChEBI" id="CHEBI:60240"/>
        <label>3</label>
    </ligand>
</feature>
<feature type="binding site" evidence="1">
    <location>
        <position position="241"/>
    </location>
    <ligand>
        <name>substrate</name>
    </ligand>
</feature>
<evidence type="ECO:0000255" key="1">
    <source>
        <dbReference type="HAMAP-Rule" id="MF_00297"/>
    </source>
</evidence>
<accession>Q6DAL8</accession>